<reference key="1">
    <citation type="submission" date="2009-01" db="EMBL/GenBank/DDBJ databases">
        <title>Complete sequence of chromosome of Arthrobacter chlorophenolicus A6.</title>
        <authorList>
            <consortium name="US DOE Joint Genome Institute"/>
            <person name="Lucas S."/>
            <person name="Copeland A."/>
            <person name="Lapidus A."/>
            <person name="Glavina del Rio T."/>
            <person name="Tice H."/>
            <person name="Bruce D."/>
            <person name="Goodwin L."/>
            <person name="Pitluck S."/>
            <person name="Goltsman E."/>
            <person name="Clum A."/>
            <person name="Larimer F."/>
            <person name="Land M."/>
            <person name="Hauser L."/>
            <person name="Kyrpides N."/>
            <person name="Mikhailova N."/>
            <person name="Jansson J."/>
            <person name="Richardson P."/>
        </authorList>
    </citation>
    <scope>NUCLEOTIDE SEQUENCE [LARGE SCALE GENOMIC DNA]</scope>
    <source>
        <strain>ATCC 700700 / DSM 12829 / CIP 107037 / JCM 12360 / KCTC 9906 / NCIMB 13794 / A6</strain>
    </source>
</reference>
<proteinExistence type="inferred from homology"/>
<comment type="function">
    <text evidence="1">Specifically methylates the N4 position of cytidine in position 1402 (C1402) of 16S rRNA.</text>
</comment>
<comment type="catalytic activity">
    <reaction evidence="1">
        <text>cytidine(1402) in 16S rRNA + S-adenosyl-L-methionine = N(4)-methylcytidine(1402) in 16S rRNA + S-adenosyl-L-homocysteine + H(+)</text>
        <dbReference type="Rhea" id="RHEA:42928"/>
        <dbReference type="Rhea" id="RHEA-COMP:10286"/>
        <dbReference type="Rhea" id="RHEA-COMP:10287"/>
        <dbReference type="ChEBI" id="CHEBI:15378"/>
        <dbReference type="ChEBI" id="CHEBI:57856"/>
        <dbReference type="ChEBI" id="CHEBI:59789"/>
        <dbReference type="ChEBI" id="CHEBI:74506"/>
        <dbReference type="ChEBI" id="CHEBI:82748"/>
        <dbReference type="EC" id="2.1.1.199"/>
    </reaction>
</comment>
<comment type="subcellular location">
    <subcellularLocation>
        <location evidence="1">Cytoplasm</location>
    </subcellularLocation>
</comment>
<comment type="similarity">
    <text evidence="1">Belongs to the methyltransferase superfamily. RsmH family.</text>
</comment>
<keyword id="KW-0963">Cytoplasm</keyword>
<keyword id="KW-0489">Methyltransferase</keyword>
<keyword id="KW-0698">rRNA processing</keyword>
<keyword id="KW-0949">S-adenosyl-L-methionine</keyword>
<keyword id="KW-0808">Transferase</keyword>
<sequence length="330" mass="36035">MNEQPKPTSERHVPVLRDRCINLLAPGFDAARQQGKAPIVIDATLGMGGHSEAMLQRFPDLHLIGIDRDEEALALAGERLAPFSARTDLVHAVYDEIPEVLADLGVTEISGILMDLGVSSLQLDERERGFAYSFDAPLDMRMDTSRGQTAADVVNTYNEEELVRIIRKWGEEKFAGRIANRIVAARGEKPFTTTGELVEQIRSVVPAGAAKSGGHPAKRTFQALRIEVNEELDVLERAVPAAVDALAMGGRIVVMSYHSLEDKIVKSVLQGRSKSSAPLGFPVELEEHKPELKILTKGTEVPTAVEIAENPRAASARLRAAERIRARRAA</sequence>
<feature type="chain" id="PRO_0000386719" description="Ribosomal RNA small subunit methyltransferase H">
    <location>
        <begin position="1"/>
        <end position="330"/>
    </location>
</feature>
<feature type="binding site" evidence="1">
    <location>
        <begin position="48"/>
        <end position="50"/>
    </location>
    <ligand>
        <name>S-adenosyl-L-methionine</name>
        <dbReference type="ChEBI" id="CHEBI:59789"/>
    </ligand>
</feature>
<feature type="binding site" evidence="1">
    <location>
        <position position="67"/>
    </location>
    <ligand>
        <name>S-adenosyl-L-methionine</name>
        <dbReference type="ChEBI" id="CHEBI:59789"/>
    </ligand>
</feature>
<feature type="binding site" evidence="1">
    <location>
        <position position="101"/>
    </location>
    <ligand>
        <name>S-adenosyl-L-methionine</name>
        <dbReference type="ChEBI" id="CHEBI:59789"/>
    </ligand>
</feature>
<feature type="binding site" evidence="1">
    <location>
        <position position="115"/>
    </location>
    <ligand>
        <name>S-adenosyl-L-methionine</name>
        <dbReference type="ChEBI" id="CHEBI:59789"/>
    </ligand>
</feature>
<feature type="binding site" evidence="1">
    <location>
        <position position="122"/>
    </location>
    <ligand>
        <name>S-adenosyl-L-methionine</name>
        <dbReference type="ChEBI" id="CHEBI:59789"/>
    </ligand>
</feature>
<organism>
    <name type="scientific">Pseudarthrobacter chlorophenolicus (strain ATCC 700700 / DSM 12829 / CIP 107037 / JCM 12360 / KCTC 9906 / NCIMB 13794 / A6)</name>
    <name type="common">Arthrobacter chlorophenolicus</name>
    <dbReference type="NCBI Taxonomy" id="452863"/>
    <lineage>
        <taxon>Bacteria</taxon>
        <taxon>Bacillati</taxon>
        <taxon>Actinomycetota</taxon>
        <taxon>Actinomycetes</taxon>
        <taxon>Micrococcales</taxon>
        <taxon>Micrococcaceae</taxon>
        <taxon>Pseudarthrobacter</taxon>
    </lineage>
</organism>
<dbReference type="EC" id="2.1.1.199" evidence="1"/>
<dbReference type="EMBL" id="CP001341">
    <property type="protein sequence ID" value="ACL39551.1"/>
    <property type="molecule type" value="Genomic_DNA"/>
</dbReference>
<dbReference type="RefSeq" id="WP_015936771.1">
    <property type="nucleotide sequence ID" value="NC_011886.1"/>
</dbReference>
<dbReference type="SMR" id="B8HGW2"/>
<dbReference type="STRING" id="452863.Achl_1563"/>
<dbReference type="KEGG" id="ach:Achl_1563"/>
<dbReference type="eggNOG" id="COG0275">
    <property type="taxonomic scope" value="Bacteria"/>
</dbReference>
<dbReference type="HOGENOM" id="CLU_038422_0_0_11"/>
<dbReference type="OrthoDB" id="9806637at2"/>
<dbReference type="Proteomes" id="UP000002505">
    <property type="component" value="Chromosome"/>
</dbReference>
<dbReference type="GO" id="GO:0005737">
    <property type="term" value="C:cytoplasm"/>
    <property type="evidence" value="ECO:0007669"/>
    <property type="project" value="UniProtKB-SubCell"/>
</dbReference>
<dbReference type="GO" id="GO:0071424">
    <property type="term" value="F:rRNA (cytosine-N4-)-methyltransferase activity"/>
    <property type="evidence" value="ECO:0007669"/>
    <property type="project" value="UniProtKB-UniRule"/>
</dbReference>
<dbReference type="GO" id="GO:0070475">
    <property type="term" value="P:rRNA base methylation"/>
    <property type="evidence" value="ECO:0007669"/>
    <property type="project" value="UniProtKB-UniRule"/>
</dbReference>
<dbReference type="FunFam" id="1.10.150.170:FF:000001">
    <property type="entry name" value="Ribosomal RNA small subunit methyltransferase H"/>
    <property type="match status" value="1"/>
</dbReference>
<dbReference type="Gene3D" id="1.10.150.170">
    <property type="entry name" value="Putative methyltransferase TM0872, insert domain"/>
    <property type="match status" value="1"/>
</dbReference>
<dbReference type="Gene3D" id="3.40.50.150">
    <property type="entry name" value="Vaccinia Virus protein VP39"/>
    <property type="match status" value="1"/>
</dbReference>
<dbReference type="HAMAP" id="MF_01007">
    <property type="entry name" value="16SrRNA_methyltr_H"/>
    <property type="match status" value="1"/>
</dbReference>
<dbReference type="InterPro" id="IPR002903">
    <property type="entry name" value="RsmH"/>
</dbReference>
<dbReference type="InterPro" id="IPR023397">
    <property type="entry name" value="SAM-dep_MeTrfase_MraW_recog"/>
</dbReference>
<dbReference type="InterPro" id="IPR029063">
    <property type="entry name" value="SAM-dependent_MTases_sf"/>
</dbReference>
<dbReference type="NCBIfam" id="TIGR00006">
    <property type="entry name" value="16S rRNA (cytosine(1402)-N(4))-methyltransferase RsmH"/>
    <property type="match status" value="1"/>
</dbReference>
<dbReference type="PANTHER" id="PTHR11265:SF0">
    <property type="entry name" value="12S RRNA N4-METHYLCYTIDINE METHYLTRANSFERASE"/>
    <property type="match status" value="1"/>
</dbReference>
<dbReference type="PANTHER" id="PTHR11265">
    <property type="entry name" value="S-ADENOSYL-METHYLTRANSFERASE MRAW"/>
    <property type="match status" value="1"/>
</dbReference>
<dbReference type="Pfam" id="PF01795">
    <property type="entry name" value="Methyltransf_5"/>
    <property type="match status" value="1"/>
</dbReference>
<dbReference type="PIRSF" id="PIRSF004486">
    <property type="entry name" value="MraW"/>
    <property type="match status" value="1"/>
</dbReference>
<dbReference type="SUPFAM" id="SSF81799">
    <property type="entry name" value="Putative methyltransferase TM0872, insert domain"/>
    <property type="match status" value="1"/>
</dbReference>
<dbReference type="SUPFAM" id="SSF53335">
    <property type="entry name" value="S-adenosyl-L-methionine-dependent methyltransferases"/>
    <property type="match status" value="1"/>
</dbReference>
<gene>
    <name evidence="1" type="primary">rsmH</name>
    <name type="synonym">mraW</name>
    <name type="ordered locus">Achl_1563</name>
</gene>
<protein>
    <recommendedName>
        <fullName evidence="1">Ribosomal RNA small subunit methyltransferase H</fullName>
        <ecNumber evidence="1">2.1.1.199</ecNumber>
    </recommendedName>
    <alternativeName>
        <fullName evidence="1">16S rRNA m(4)C1402 methyltransferase</fullName>
    </alternativeName>
    <alternativeName>
        <fullName evidence="1">rRNA (cytosine-N(4)-)-methyltransferase RsmH</fullName>
    </alternativeName>
</protein>
<evidence type="ECO:0000255" key="1">
    <source>
        <dbReference type="HAMAP-Rule" id="MF_01007"/>
    </source>
</evidence>
<name>RSMH_PSECP</name>
<accession>B8HGW2</accession>